<organism>
    <name type="scientific">Mus musculus</name>
    <name type="common">Mouse</name>
    <dbReference type="NCBI Taxonomy" id="10090"/>
    <lineage>
        <taxon>Eukaryota</taxon>
        <taxon>Metazoa</taxon>
        <taxon>Chordata</taxon>
        <taxon>Craniata</taxon>
        <taxon>Vertebrata</taxon>
        <taxon>Euteleostomi</taxon>
        <taxon>Mammalia</taxon>
        <taxon>Eutheria</taxon>
        <taxon>Euarchontoglires</taxon>
        <taxon>Glires</taxon>
        <taxon>Rodentia</taxon>
        <taxon>Myomorpha</taxon>
        <taxon>Muroidea</taxon>
        <taxon>Muridae</taxon>
        <taxon>Murinae</taxon>
        <taxon>Mus</taxon>
        <taxon>Mus</taxon>
    </lineage>
</organism>
<comment type="function">
    <text evidence="7 8">Atypical MAPK protein. Phosphorylates microtubule-associated protein 2 (MAP2) and MAPKAPK5. The precise role of the complex formed with MAPKAPK5 is still unclear, but the complex follows a complex set of phosphorylation events: upon interaction with atypical MAPKAPK5, ERK3/MAPK6 is phosphorylated at Ser-189 and then mediates phosphorylation and activation of MAPKAPK5, which in turn phosphorylates ERK3/MAPK6. May promote entry in the cell cycle.</text>
</comment>
<comment type="catalytic activity">
    <reaction>
        <text>L-seryl-[protein] + ATP = O-phospho-L-seryl-[protein] + ADP + H(+)</text>
        <dbReference type="Rhea" id="RHEA:17989"/>
        <dbReference type="Rhea" id="RHEA-COMP:9863"/>
        <dbReference type="Rhea" id="RHEA-COMP:11604"/>
        <dbReference type="ChEBI" id="CHEBI:15378"/>
        <dbReference type="ChEBI" id="CHEBI:29999"/>
        <dbReference type="ChEBI" id="CHEBI:30616"/>
        <dbReference type="ChEBI" id="CHEBI:83421"/>
        <dbReference type="ChEBI" id="CHEBI:456216"/>
        <dbReference type="EC" id="2.7.11.24"/>
    </reaction>
</comment>
<comment type="catalytic activity">
    <reaction>
        <text>L-threonyl-[protein] + ATP = O-phospho-L-threonyl-[protein] + ADP + H(+)</text>
        <dbReference type="Rhea" id="RHEA:46608"/>
        <dbReference type="Rhea" id="RHEA-COMP:11060"/>
        <dbReference type="Rhea" id="RHEA-COMP:11605"/>
        <dbReference type="ChEBI" id="CHEBI:15378"/>
        <dbReference type="ChEBI" id="CHEBI:30013"/>
        <dbReference type="ChEBI" id="CHEBI:30616"/>
        <dbReference type="ChEBI" id="CHEBI:61977"/>
        <dbReference type="ChEBI" id="CHEBI:456216"/>
        <dbReference type="EC" id="2.7.11.24"/>
    </reaction>
</comment>
<comment type="cofactor">
    <cofactor evidence="1">
        <name>Mg(2+)</name>
        <dbReference type="ChEBI" id="CHEBI:18420"/>
    </cofactor>
</comment>
<comment type="activity regulation">
    <text>Activated by phosphorylation at Ser-189.</text>
</comment>
<comment type="subunit">
    <text evidence="1">Heterodimer with ERK4/MAPK4. Interacts with (via FRIEDE motif) MAPKAPK5. Interacts with UBE3A; this interaction may be indirect and mediated by HERC2, possibly via HERC2 interaction with NEURL4 (By similarity).</text>
</comment>
<comment type="subcellular location">
    <subcellularLocation>
        <location>Cytoplasm</location>
    </subcellularLocation>
    <subcellularLocation>
        <location>Nucleus</location>
    </subcellularLocation>
    <text>Translocates to the cytoplasm following interaction with MAPKAPK5.</text>
</comment>
<comment type="developmental stage">
    <text evidence="6">Expression increases markedly from days 9 to 11 in the developing embryo, followed by a gradual decrease up to birth.</text>
</comment>
<comment type="domain">
    <text evidence="10">In contrast to classical MAPKs, the TXY motif within the activation loop is replaced by the SEG motif, whose phosphorylation activates the MAP kinases.</text>
</comment>
<comment type="PTM">
    <text evidence="9">Phosphorylated at Ser-189 by PAK1, PAK2 and PAK3 resulting in catalytic activation. Phosphorylated by MAPKAPK5 at other sites.</text>
</comment>
<comment type="PTM">
    <text evidence="1">Ubiquitination at Met-1 leads to degradation by the proteasome pathway.</text>
</comment>
<comment type="similarity">
    <text evidence="11">Belongs to the protein kinase superfamily. CMGC Ser/Thr protein kinase family. MAP kinase subfamily.</text>
</comment>
<name>MK06_MOUSE</name>
<evidence type="ECO:0000250" key="1"/>
<evidence type="ECO:0000250" key="2">
    <source>
        <dbReference type="UniProtKB" id="Q16659"/>
    </source>
</evidence>
<evidence type="ECO:0000255" key="3">
    <source>
        <dbReference type="PROSITE-ProRule" id="PRU00159"/>
    </source>
</evidence>
<evidence type="ECO:0000255" key="4">
    <source>
        <dbReference type="PROSITE-ProRule" id="PRU10027"/>
    </source>
</evidence>
<evidence type="ECO:0000256" key="5">
    <source>
        <dbReference type="SAM" id="MobiDB-lite"/>
    </source>
</evidence>
<evidence type="ECO:0000269" key="6">
    <source>
    </source>
</evidence>
<evidence type="ECO:0000269" key="7">
    <source>
    </source>
</evidence>
<evidence type="ECO:0000269" key="8">
    <source>
    </source>
</evidence>
<evidence type="ECO:0000269" key="9">
    <source>
    </source>
</evidence>
<evidence type="ECO:0000269" key="10">
    <source>
    </source>
</evidence>
<evidence type="ECO:0000305" key="11"/>
<evidence type="ECO:0000305" key="12">
    <source>
    </source>
</evidence>
<gene>
    <name type="primary">Mapk6</name>
    <name type="synonym">Erk3</name>
    <name type="synonym">Prkm4</name>
    <name type="synonym">Prkm6</name>
</gene>
<keyword id="KW-0067">ATP-binding</keyword>
<keyword id="KW-0131">Cell cycle</keyword>
<keyword id="KW-0963">Cytoplasm</keyword>
<keyword id="KW-0418">Kinase</keyword>
<keyword id="KW-0547">Nucleotide-binding</keyword>
<keyword id="KW-0539">Nucleus</keyword>
<keyword id="KW-0597">Phosphoprotein</keyword>
<keyword id="KW-1185">Reference proteome</keyword>
<keyword id="KW-0723">Serine/threonine-protein kinase</keyword>
<keyword id="KW-0808">Transferase</keyword>
<keyword id="KW-0832">Ubl conjugation</keyword>
<feature type="chain" id="PRO_0000186258" description="Mitogen-activated protein kinase 6">
    <location>
        <begin position="1"/>
        <end position="720"/>
    </location>
</feature>
<feature type="domain" description="Protein kinase" evidence="3">
    <location>
        <begin position="20"/>
        <end position="316"/>
    </location>
</feature>
<feature type="region of interest" description="Disordered" evidence="5">
    <location>
        <begin position="638"/>
        <end position="657"/>
    </location>
</feature>
<feature type="region of interest" description="Disordered" evidence="5">
    <location>
        <begin position="700"/>
        <end position="720"/>
    </location>
</feature>
<feature type="short sequence motif" description="SEG motif">
    <location>
        <begin position="189"/>
        <end position="191"/>
    </location>
</feature>
<feature type="short sequence motif" description="FRIEDE motif">
    <location>
        <begin position="332"/>
        <end position="337"/>
    </location>
</feature>
<feature type="compositionally biased region" description="Basic and acidic residues" evidence="5">
    <location>
        <begin position="647"/>
        <end position="657"/>
    </location>
</feature>
<feature type="compositionally biased region" description="Polar residues" evidence="5">
    <location>
        <begin position="700"/>
        <end position="714"/>
    </location>
</feature>
<feature type="active site" description="Proton acceptor" evidence="3 4">
    <location>
        <position position="152"/>
    </location>
</feature>
<feature type="binding site" evidence="3">
    <location>
        <begin position="26"/>
        <end position="34"/>
    </location>
    <ligand>
        <name>ATP</name>
        <dbReference type="ChEBI" id="CHEBI:30616"/>
    </ligand>
</feature>
<feature type="binding site" evidence="3">
    <location>
        <position position="49"/>
    </location>
    <ligand>
        <name>ATP</name>
        <dbReference type="ChEBI" id="CHEBI:30616"/>
    </ligand>
</feature>
<feature type="modified residue" description="Phosphoserine; by PAK1, PAK2 and PAK3" evidence="12">
    <location>
        <position position="189"/>
    </location>
</feature>
<feature type="modified residue" description="Phosphoserine" evidence="2">
    <location>
        <position position="386"/>
    </location>
</feature>
<feature type="modified residue" description="Phosphoserine" evidence="2">
    <location>
        <position position="554"/>
    </location>
</feature>
<feature type="modified residue" description="Phosphoserine" evidence="2">
    <location>
        <position position="556"/>
    </location>
</feature>
<feature type="modified residue" description="Phosphoserine" evidence="2">
    <location>
        <position position="683"/>
    </location>
</feature>
<feature type="cross-link" description="Peptide (Met-Gly) (interchain with G-Cter in ubiquitin)" evidence="1">
    <location>
        <position position="1"/>
    </location>
</feature>
<feature type="mutagenesis site" description="Kinase defective mutant, abolishes activity." evidence="8">
    <original>D</original>
    <variation>A</variation>
    <location>
        <position position="171"/>
    </location>
</feature>
<feature type="mutagenesis site" description="Unable to activate MAPKAPK5 promote MAPKAPK5 localization to the cytoplasm." evidence="8 9">
    <original>S</original>
    <variation>A</variation>
    <location>
        <position position="189"/>
    </location>
</feature>
<feature type="mutagenesis site" description="Mimicks phosphorylation state and induces constitutive protein kinase activity." evidence="8 9">
    <original>S</original>
    <variation>E</variation>
    <location>
        <position position="189"/>
    </location>
</feature>
<feature type="mutagenesis site" description="Abolishes binding to MAPKAPK5." evidence="10">
    <original>I</original>
    <variation>K</variation>
    <location>
        <position position="334"/>
    </location>
</feature>
<feature type="sequence conflict" description="In Ref. 2; AAN64588." evidence="11" ref="2">
    <original>R</original>
    <variation>T</variation>
    <location>
        <position position="19"/>
    </location>
</feature>
<feature type="sequence conflict" description="In Ref. 2; AAN64588." evidence="11" ref="2">
    <original>ND</original>
    <variation>KY</variation>
    <location>
        <begin position="40"/>
        <end position="41"/>
    </location>
</feature>
<feature type="sequence conflict" description="In Ref. 3; AAI00386." evidence="11" ref="3">
    <original>L</original>
    <variation>P</variation>
    <location>
        <position position="63"/>
    </location>
</feature>
<feature type="sequence conflict" description="In Ref. 1; AAF61348." evidence="11" ref="1">
    <original>P</original>
    <variation>S</variation>
    <location>
        <position position="123"/>
    </location>
</feature>
<feature type="sequence conflict" description="In Ref. 2; AAN64588." evidence="11" ref="2">
    <original>E</original>
    <variation>K</variation>
    <location>
        <position position="574"/>
    </location>
</feature>
<accession>Q61532</accession>
<accession>Q497T9</accession>
<accession>Q6YKB0</accession>
<accession>Q7TT30</accession>
<accession>Q80XH5</accession>
<accession>Q922U4</accession>
<accession>Q9JLU6</accession>
<proteinExistence type="evidence at protein level"/>
<reference key="1">
    <citation type="journal article" date="2000" name="Biochem. J.">
        <title>Cloning and characterization of mouse extracellular-signal-regulated protein kinase 3 as a unique gene product of 100 kDa.</title>
        <authorList>
            <person name="Turgeon B."/>
            <person name="Saba-El-Leil M.K."/>
            <person name="Meloche S."/>
        </authorList>
    </citation>
    <scope>NUCLEOTIDE SEQUENCE [MRNA]</scope>
    <scope>DEVELOPMENTAL STAGE</scope>
    <source>
        <tissue>Pituitary</tissue>
    </source>
</reference>
<reference key="2">
    <citation type="journal article" date="2002" name="Genomics">
        <title>The protein kinase ERK3 is encoded by a single functional gene: genomic analysis of the ERK3 gene family.</title>
        <authorList>
            <person name="Turgeon B."/>
            <person name="Lang B.F."/>
            <person name="Meloche S."/>
        </authorList>
    </citation>
    <scope>NUCLEOTIDE SEQUENCE [GENOMIC DNA]</scope>
    <source>
        <strain>129/Sv</strain>
    </source>
</reference>
<reference key="3">
    <citation type="journal article" date="2004" name="Genome Res.">
        <title>The status, quality, and expansion of the NIH full-length cDNA project: the Mammalian Gene Collection (MGC).</title>
        <authorList>
            <consortium name="The MGC Project Team"/>
        </authorList>
    </citation>
    <scope>NUCLEOTIDE SEQUENCE [LARGE SCALE MRNA]</scope>
    <source>
        <strain>C57BL/6J</strain>
        <strain>Czech II</strain>
        <tissue>Embryonic brain</tissue>
        <tissue>Embryonic germ cell</tissue>
        <tissue>Mammary tumor</tissue>
        <tissue>Olfactory epithelium</tissue>
    </source>
</reference>
<reference key="4">
    <citation type="journal article" date="1993" name="Gene">
        <title>Novel CDC2-related protein kinases produced in murine hematopoietic stem cells.</title>
        <authorList>
            <person name="Ershler M.A."/>
            <person name="Nagorskaya T.V."/>
            <person name="Visser J.W.M."/>
            <person name="Belyavsky A.V."/>
        </authorList>
    </citation>
    <scope>NUCLEOTIDE SEQUENCE [MRNA] OF 156-195</scope>
    <source>
        <strain>CBA/J</strain>
        <tissue>Hematopoietic</tissue>
    </source>
</reference>
<reference key="5">
    <citation type="journal article" date="2004" name="EMBO J.">
        <title>Scaffolding by ERK3 regulates MK5 in development.</title>
        <authorList>
            <person name="Schumacher S."/>
            <person name="Laass K."/>
            <person name="Kant S."/>
            <person name="Shi Y."/>
            <person name="Visel A."/>
            <person name="Gruber A.D."/>
            <person name="Kotlyarov A."/>
            <person name="Gaestel M."/>
        </authorList>
    </citation>
    <scope>FUNCTION IN PHOSPHORYLATION OF MAPKAPK5</scope>
    <scope>SUBCELLULAR LOCATION</scope>
    <scope>INTERACTION WITH MAPKAPK5</scope>
</reference>
<reference key="6">
    <citation type="journal article" date="2004" name="EMBO J.">
        <title>Activation of MK5/PRAK by the atypical MAP kinase ERK3 defines a novel signal transduction pathway.</title>
        <authorList>
            <person name="Seternes O.M."/>
            <person name="Mikalsen T."/>
            <person name="Johansen B."/>
            <person name="Michaelsen E."/>
            <person name="Armstrong C.G."/>
            <person name="Morrice N.A."/>
            <person name="Turgeon B."/>
            <person name="Meloche S."/>
            <person name="Moens U."/>
            <person name="Keyse S.M."/>
        </authorList>
    </citation>
    <scope>FUNCTION IN PHOSPHORYLATION OF MAPKAPK5</scope>
    <scope>SUBCELLULAR LOCATION</scope>
    <scope>INTERACTION WITH MAPKAPK5</scope>
    <scope>MUTAGENESIS OF ASP-171 AND SER-189</scope>
</reference>
<reference key="7">
    <citation type="journal article" date="2006" name="J. Biol. Chem.">
        <title>Characterization of the atypical MAPK ERK4 and its activation of the MAPK-activated protein kinase MK5.</title>
        <authorList>
            <person name="Kant S."/>
            <person name="Schumacher S."/>
            <person name="Singh M.K."/>
            <person name="Kispert A."/>
            <person name="Kotlyarov A."/>
            <person name="Gaestel M."/>
        </authorList>
    </citation>
    <scope>INTERACTION WITH MAPK4</scope>
</reference>
<reference key="8">
    <citation type="journal article" date="2008" name="J. Cell. Physiol.">
        <title>Activation loop phosphorylation of the atypical MAP kinases ERK3 and ERK4 is required for binding, activation and cytoplasmic relocalization of MK5.</title>
        <authorList>
            <person name="Deleris P."/>
            <person name="Rousseau J."/>
            <person name="Coulombe P."/>
            <person name="Rodier G."/>
            <person name="Tanguay P.L."/>
            <person name="Meloche S."/>
        </authorList>
    </citation>
    <scope>INTERACTION WITH MAPKAPK5</scope>
    <scope>PHOSPHORYLATION AT SER-189</scope>
    <scope>MUTAGENESIS OF SER-189</scope>
</reference>
<reference key="9">
    <citation type="journal article" date="2009" name="J. Biol. Chem.">
        <title>Docking of PRAK/MK5 to the atypical MAPKs ERK3 and ERK4 defines a novel MAPK interaction motif.</title>
        <authorList>
            <person name="Aberg E."/>
            <person name="Torgersen K.M."/>
            <person name="Johansen B."/>
            <person name="Keyse S.M."/>
            <person name="Perander M."/>
            <person name="Seternes O.M."/>
        </authorList>
    </citation>
    <scope>INTERACTION WITH MAPKAPK5</scope>
    <scope>DOMAIN FRIEDE MOTIF</scope>
    <scope>MUTAGENESIS OF ILE-334</scope>
</reference>
<dbReference type="EC" id="2.7.11.24"/>
<dbReference type="EMBL" id="AF132850">
    <property type="protein sequence ID" value="AAF61348.1"/>
    <property type="molecule type" value="mRNA"/>
</dbReference>
<dbReference type="EMBL" id="AY134883">
    <property type="protein sequence ID" value="AAN64588.1"/>
    <property type="molecule type" value="Genomic_DNA"/>
</dbReference>
<dbReference type="EMBL" id="AY134660">
    <property type="protein sequence ID" value="AAN64588.1"/>
    <property type="status" value="JOINED"/>
    <property type="molecule type" value="Genomic_DNA"/>
</dbReference>
<dbReference type="EMBL" id="AY134880">
    <property type="protein sequence ID" value="AAN64588.1"/>
    <property type="status" value="JOINED"/>
    <property type="molecule type" value="Genomic_DNA"/>
</dbReference>
<dbReference type="EMBL" id="AY134881">
    <property type="protein sequence ID" value="AAN64588.1"/>
    <property type="status" value="JOINED"/>
    <property type="molecule type" value="Genomic_DNA"/>
</dbReference>
<dbReference type="EMBL" id="AY134882">
    <property type="protein sequence ID" value="AAN64588.1"/>
    <property type="status" value="JOINED"/>
    <property type="molecule type" value="Genomic_DNA"/>
</dbReference>
<dbReference type="EMBL" id="BC006778">
    <property type="protein sequence ID" value="AAH06778.1"/>
    <property type="molecule type" value="mRNA"/>
</dbReference>
<dbReference type="EMBL" id="BC048779">
    <property type="protein sequence ID" value="AAH48779.1"/>
    <property type="molecule type" value="mRNA"/>
</dbReference>
<dbReference type="EMBL" id="BC052420">
    <property type="protein sequence ID" value="AAH52420.2"/>
    <property type="molecule type" value="mRNA"/>
</dbReference>
<dbReference type="EMBL" id="BC100385">
    <property type="protein sequence ID" value="AAI00386.1"/>
    <property type="molecule type" value="mRNA"/>
</dbReference>
<dbReference type="EMBL" id="X64607">
    <property type="protein sequence ID" value="CAA45891.1"/>
    <property type="molecule type" value="mRNA"/>
</dbReference>
<dbReference type="CCDS" id="CCDS23342.1"/>
<dbReference type="PIR" id="PN0481">
    <property type="entry name" value="PN0481"/>
</dbReference>
<dbReference type="RefSeq" id="NP_056621.4">
    <property type="nucleotide sequence ID" value="NM_015806.5"/>
</dbReference>
<dbReference type="RefSeq" id="NP_081694.1">
    <property type="nucleotide sequence ID" value="NM_027418.2"/>
</dbReference>
<dbReference type="RefSeq" id="XP_011241069.1">
    <property type="nucleotide sequence ID" value="XM_011242767.4"/>
</dbReference>
<dbReference type="SMR" id="Q61532"/>
<dbReference type="BioGRID" id="206104">
    <property type="interactions" value="10"/>
</dbReference>
<dbReference type="FunCoup" id="Q61532">
    <property type="interactions" value="3081"/>
</dbReference>
<dbReference type="STRING" id="10090.ENSMUSP00000129024"/>
<dbReference type="iPTMnet" id="Q61532"/>
<dbReference type="PhosphoSitePlus" id="Q61532"/>
<dbReference type="jPOST" id="Q61532"/>
<dbReference type="PaxDb" id="10090-ENSMUSP00000040315"/>
<dbReference type="PeptideAtlas" id="Q61532"/>
<dbReference type="ProteomicsDB" id="252571"/>
<dbReference type="Antibodypedia" id="3920">
    <property type="antibodies" value="570 antibodies from 38 providers"/>
</dbReference>
<dbReference type="DNASU" id="50772"/>
<dbReference type="Ensembl" id="ENSMUST00000049355.11">
    <property type="protein sequence ID" value="ENSMUSP00000040315.11"/>
    <property type="gene ID" value="ENSMUSG00000042688.17"/>
</dbReference>
<dbReference type="Ensembl" id="ENSMUST00000168937.8">
    <property type="protein sequence ID" value="ENSMUSP00000129024.2"/>
    <property type="gene ID" value="ENSMUSG00000042688.17"/>
</dbReference>
<dbReference type="GeneID" id="50772"/>
<dbReference type="KEGG" id="mmu:50772"/>
<dbReference type="UCSC" id="uc009qsd.2">
    <property type="organism name" value="mouse"/>
</dbReference>
<dbReference type="AGR" id="MGI:1354946"/>
<dbReference type="CTD" id="5597"/>
<dbReference type="MGI" id="MGI:1354946">
    <property type="gene designation" value="Mapk6"/>
</dbReference>
<dbReference type="VEuPathDB" id="HostDB:ENSMUSG00000042688"/>
<dbReference type="eggNOG" id="KOG0660">
    <property type="taxonomic scope" value="Eukaryota"/>
</dbReference>
<dbReference type="GeneTree" id="ENSGT00940000154351"/>
<dbReference type="HOGENOM" id="CLU_000288_181_15_1"/>
<dbReference type="InParanoid" id="Q61532"/>
<dbReference type="OMA" id="EADWQLH"/>
<dbReference type="OrthoDB" id="8806754at2759"/>
<dbReference type="PhylomeDB" id="Q61532"/>
<dbReference type="TreeFam" id="TF105098"/>
<dbReference type="BRENDA" id="2.7.11.24">
    <property type="organism ID" value="3474"/>
</dbReference>
<dbReference type="Reactome" id="R-MMU-5687128">
    <property type="pathway name" value="MAPK6/MAPK4 signaling"/>
</dbReference>
<dbReference type="BioGRID-ORCS" id="50772">
    <property type="hits" value="0 hits in 81 CRISPR screens"/>
</dbReference>
<dbReference type="CD-CODE" id="01CA17F3">
    <property type="entry name" value="Centrosome"/>
</dbReference>
<dbReference type="ChiTaRS" id="Mapk6">
    <property type="organism name" value="mouse"/>
</dbReference>
<dbReference type="PRO" id="PR:Q61532"/>
<dbReference type="Proteomes" id="UP000000589">
    <property type="component" value="Chromosome 9"/>
</dbReference>
<dbReference type="RNAct" id="Q61532">
    <property type="molecule type" value="protein"/>
</dbReference>
<dbReference type="Bgee" id="ENSMUSG00000042688">
    <property type="expression patterns" value="Expressed in spermatocyte and 269 other cell types or tissues"/>
</dbReference>
<dbReference type="GO" id="GO:0005737">
    <property type="term" value="C:cytoplasm"/>
    <property type="evidence" value="ECO:0000314"/>
    <property type="project" value="UniProtKB"/>
</dbReference>
<dbReference type="GO" id="GO:0005829">
    <property type="term" value="C:cytosol"/>
    <property type="evidence" value="ECO:0007669"/>
    <property type="project" value="Ensembl"/>
</dbReference>
<dbReference type="GO" id="GO:0005634">
    <property type="term" value="C:nucleus"/>
    <property type="evidence" value="ECO:0000314"/>
    <property type="project" value="UniProtKB"/>
</dbReference>
<dbReference type="GO" id="GO:0032991">
    <property type="term" value="C:protein-containing complex"/>
    <property type="evidence" value="ECO:0000314"/>
    <property type="project" value="MGI"/>
</dbReference>
<dbReference type="GO" id="GO:0032156">
    <property type="term" value="C:septin cytoskeleton"/>
    <property type="evidence" value="ECO:0000314"/>
    <property type="project" value="MGI"/>
</dbReference>
<dbReference type="GO" id="GO:0005524">
    <property type="term" value="F:ATP binding"/>
    <property type="evidence" value="ECO:0007669"/>
    <property type="project" value="UniProtKB-KW"/>
</dbReference>
<dbReference type="GO" id="GO:0004707">
    <property type="term" value="F:MAP kinase activity"/>
    <property type="evidence" value="ECO:0000314"/>
    <property type="project" value="UniProtKB"/>
</dbReference>
<dbReference type="GO" id="GO:0046982">
    <property type="term" value="F:protein heterodimerization activity"/>
    <property type="evidence" value="ECO:0000353"/>
    <property type="project" value="UniProtKB"/>
</dbReference>
<dbReference type="GO" id="GO:0004672">
    <property type="term" value="F:protein kinase activity"/>
    <property type="evidence" value="ECO:0000314"/>
    <property type="project" value="MGI"/>
</dbReference>
<dbReference type="GO" id="GO:0019901">
    <property type="term" value="F:protein kinase binding"/>
    <property type="evidence" value="ECO:0000353"/>
    <property type="project" value="UniProtKB"/>
</dbReference>
<dbReference type="GO" id="GO:0106310">
    <property type="term" value="F:protein serine kinase activity"/>
    <property type="evidence" value="ECO:0007669"/>
    <property type="project" value="RHEA"/>
</dbReference>
<dbReference type="GO" id="GO:0060999">
    <property type="term" value="P:positive regulation of dendritic spine development"/>
    <property type="evidence" value="ECO:0000316"/>
    <property type="project" value="MGI"/>
</dbReference>
<dbReference type="GO" id="GO:0006468">
    <property type="term" value="P:protein phosphorylation"/>
    <property type="evidence" value="ECO:0000314"/>
    <property type="project" value="UniProtKB"/>
</dbReference>
<dbReference type="CDD" id="cd07854">
    <property type="entry name" value="STKc_MAPK4_6"/>
    <property type="match status" value="1"/>
</dbReference>
<dbReference type="FunFam" id="3.30.200.20:FF:000223">
    <property type="entry name" value="Mitogen-activated protein kinase 6"/>
    <property type="match status" value="1"/>
</dbReference>
<dbReference type="FunFam" id="1.10.510.10:FF:000136">
    <property type="entry name" value="mitogen-activated protein kinase 6"/>
    <property type="match status" value="1"/>
</dbReference>
<dbReference type="Gene3D" id="3.30.200.20">
    <property type="entry name" value="Phosphorylase Kinase, domain 1"/>
    <property type="match status" value="1"/>
</dbReference>
<dbReference type="Gene3D" id="1.10.510.10">
    <property type="entry name" value="Transferase(Phosphotransferase) domain 1"/>
    <property type="match status" value="1"/>
</dbReference>
<dbReference type="InterPro" id="IPR011009">
    <property type="entry name" value="Kinase-like_dom_sf"/>
</dbReference>
<dbReference type="InterPro" id="IPR050117">
    <property type="entry name" value="MAP_kinase"/>
</dbReference>
<dbReference type="InterPro" id="IPR008350">
    <property type="entry name" value="MAPK_ERK3/4"/>
</dbReference>
<dbReference type="InterPro" id="IPR000719">
    <property type="entry name" value="Prot_kinase_dom"/>
</dbReference>
<dbReference type="InterPro" id="IPR017441">
    <property type="entry name" value="Protein_kinase_ATP_BS"/>
</dbReference>
<dbReference type="InterPro" id="IPR008271">
    <property type="entry name" value="Ser/Thr_kinase_AS"/>
</dbReference>
<dbReference type="PANTHER" id="PTHR24055">
    <property type="entry name" value="MITOGEN-ACTIVATED PROTEIN KINASE"/>
    <property type="match status" value="1"/>
</dbReference>
<dbReference type="Pfam" id="PF00069">
    <property type="entry name" value="Pkinase"/>
    <property type="match status" value="1"/>
</dbReference>
<dbReference type="PRINTS" id="PR01771">
    <property type="entry name" value="ERK3ERK4MAPK"/>
</dbReference>
<dbReference type="SMART" id="SM00220">
    <property type="entry name" value="S_TKc"/>
    <property type="match status" value="1"/>
</dbReference>
<dbReference type="SUPFAM" id="SSF56112">
    <property type="entry name" value="Protein kinase-like (PK-like)"/>
    <property type="match status" value="1"/>
</dbReference>
<dbReference type="PROSITE" id="PS00107">
    <property type="entry name" value="PROTEIN_KINASE_ATP"/>
    <property type="match status" value="1"/>
</dbReference>
<dbReference type="PROSITE" id="PS50011">
    <property type="entry name" value="PROTEIN_KINASE_DOM"/>
    <property type="match status" value="1"/>
</dbReference>
<dbReference type="PROSITE" id="PS00108">
    <property type="entry name" value="PROTEIN_KINASE_ST"/>
    <property type="match status" value="1"/>
</dbReference>
<protein>
    <recommendedName>
        <fullName>Mitogen-activated protein kinase 6</fullName>
        <shortName>MAP kinase 6</shortName>
        <shortName>MAPK 6</shortName>
        <ecNumber>2.7.11.24</ecNumber>
    </recommendedName>
    <alternativeName>
        <fullName>Extracellular signal-regulated kinase 3</fullName>
        <shortName>ERK-3</shortName>
    </alternativeName>
</protein>
<sequence length="720" mass="82199">MAEKFESLMNIHGFDLGSRYMDLKPLGCGGNGLVFSAVDNDCDKRVAIKKIVLTDPQSVKHALREIKIIRRLDHDNIVKVFEILGPSGSQLTDDVGSLTELNSVYIVQEYMETDLANVLEQGPLLEEHARLFMYQLLRGLKYIHSANVLHRDLKPANLFINTEDLVLKIGDFGLARIMDPHYSHKGHLSEGLVTKWYRSPRLLLSPNNYTKAIDMWAAGCIFAEMLTGKTLFAGAHELEQMQLILDSIPVVHEEDRQELLSVIPVYIRNDMTEPHRPLTQLLPGISREALDFLEQILTFSPMDRLTAEEALSHPYMSIYSFPTDEPISSHPFHIEDEVDDILLMDETHSHIYNWERYHDCQFSEHDWPIHNNFDIDEVQLDPRALSDVTDEEEVQVDPRKYLDGDREKYLEDPAFDTSYSAEPCWQYPDHHENKYCDLECSHTCNYKTRSSPYLDNLVWRESEVNHYYEPKLIIDLSNWKEQSKEKSDKRGKSKCERNGLVKAQIALEEASQQLAERERGQGFDFDSFIAGTIQLSAQHQSADVVDKLNDLNSSVSQLELKSLISKSVSREKQEKGRANLAQLGALYQSSWDSQFVSGGEECFLISQFCCEVRKDEHAEKENTYTSYLDKFFSRKEDSEMLETEPVEEGKRGERGREAGLLSGGGEFLLSKQLESIGTPQFHSPVGSPLKSIQATLTPSAMKSSPQIPHKTYSSILKHLN</sequence>